<accession>P51971</accession>
<organism>
    <name type="scientific">Gallus gallus</name>
    <name type="common">Chicken</name>
    <dbReference type="NCBI Taxonomy" id="9031"/>
    <lineage>
        <taxon>Eukaryota</taxon>
        <taxon>Metazoa</taxon>
        <taxon>Chordata</taxon>
        <taxon>Craniata</taxon>
        <taxon>Vertebrata</taxon>
        <taxon>Euteleostomi</taxon>
        <taxon>Archelosauria</taxon>
        <taxon>Archosauria</taxon>
        <taxon>Dinosauria</taxon>
        <taxon>Saurischia</taxon>
        <taxon>Theropoda</taxon>
        <taxon>Coelurosauria</taxon>
        <taxon>Aves</taxon>
        <taxon>Neognathae</taxon>
        <taxon>Galloanserae</taxon>
        <taxon>Galliformes</taxon>
        <taxon>Phasianidae</taxon>
        <taxon>Phasianinae</taxon>
        <taxon>Gallus</taxon>
    </lineage>
</organism>
<sequence>MSAIQNLQPFDPFADASKGDDLLPAGTEDYIHIRIQQRNGRKTLTTVQGIADDYDKKKLVKAFKKKFACNGTVIEHPEYGEVIQLQGDQRKNICQFLVEIGLAKDDQLKVHGF</sequence>
<reference key="1">
    <citation type="journal article" date="1995" name="Eur. J. Biochem.">
        <title>Molecular characterization and physiological regulation of a TATA-less gene encoding chicken gastrin.</title>
        <authorList>
            <person name="Wu S.V."/>
            <person name="Dimaline R."/>
            <person name="Walsh J.H."/>
            <person name="Campbell B.J."/>
        </authorList>
    </citation>
    <scope>NUCLEOTIDE SEQUENCE [GENOMIC DNA]</scope>
</reference>
<reference key="2">
    <citation type="journal article" date="2004" name="Nature">
        <title>Sequence and comparative analysis of the chicken genome provide unique perspectives on vertebrate evolution.</title>
        <authorList>
            <person name="Hillier L.W."/>
            <person name="Miller W."/>
            <person name="Birney E."/>
            <person name="Warren W."/>
            <person name="Hardison R.C."/>
            <person name="Ponting C.P."/>
            <person name="Bork P."/>
            <person name="Burt D.W."/>
            <person name="Groenen M.A.M."/>
            <person name="Delany M.E."/>
            <person name="Dodgson J.B."/>
            <person name="Chinwalla A.T."/>
            <person name="Cliften P.F."/>
            <person name="Clifton S.W."/>
            <person name="Delehaunty K.D."/>
            <person name="Fronick C."/>
            <person name="Fulton R.S."/>
            <person name="Graves T.A."/>
            <person name="Kremitzki C."/>
            <person name="Layman D."/>
            <person name="Magrini V."/>
            <person name="McPherson J.D."/>
            <person name="Miner T.L."/>
            <person name="Minx P."/>
            <person name="Nash W.E."/>
            <person name="Nhan M.N."/>
            <person name="Nelson J.O."/>
            <person name="Oddy L.G."/>
            <person name="Pohl C.S."/>
            <person name="Randall-Maher J."/>
            <person name="Smith S.M."/>
            <person name="Wallis J.W."/>
            <person name="Yang S.-P."/>
            <person name="Romanov M.N."/>
            <person name="Rondelli C.M."/>
            <person name="Paton B."/>
            <person name="Smith J."/>
            <person name="Morrice D."/>
            <person name="Daniels L."/>
            <person name="Tempest H.G."/>
            <person name="Robertson L."/>
            <person name="Masabanda J.S."/>
            <person name="Griffin D.K."/>
            <person name="Vignal A."/>
            <person name="Fillon V."/>
            <person name="Jacobbson L."/>
            <person name="Kerje S."/>
            <person name="Andersson L."/>
            <person name="Crooijmans R.P."/>
            <person name="Aerts J."/>
            <person name="van der Poel J.J."/>
            <person name="Ellegren H."/>
            <person name="Caldwell R.B."/>
            <person name="Hubbard S.J."/>
            <person name="Grafham D.V."/>
            <person name="Kierzek A.M."/>
            <person name="McLaren S.R."/>
            <person name="Overton I.M."/>
            <person name="Arakawa H."/>
            <person name="Beattie K.J."/>
            <person name="Bezzubov Y."/>
            <person name="Boardman P.E."/>
            <person name="Bonfield J.K."/>
            <person name="Croning M.D.R."/>
            <person name="Davies R.M."/>
            <person name="Francis M.D."/>
            <person name="Humphray S.J."/>
            <person name="Scott C.E."/>
            <person name="Taylor R.G."/>
            <person name="Tickle C."/>
            <person name="Brown W.R.A."/>
            <person name="Rogers J."/>
            <person name="Buerstedde J.-M."/>
            <person name="Wilson S.A."/>
            <person name="Stubbs L."/>
            <person name="Ovcharenko I."/>
            <person name="Gordon L."/>
            <person name="Lucas S."/>
            <person name="Miller M.M."/>
            <person name="Inoko H."/>
            <person name="Shiina T."/>
            <person name="Kaufman J."/>
            <person name="Salomonsen J."/>
            <person name="Skjoedt K."/>
            <person name="Wong G.K.-S."/>
            <person name="Wang J."/>
            <person name="Liu B."/>
            <person name="Wang J."/>
            <person name="Yu J."/>
            <person name="Yang H."/>
            <person name="Nefedov M."/>
            <person name="Koriabine M."/>
            <person name="Dejong P.J."/>
            <person name="Goodstadt L."/>
            <person name="Webber C."/>
            <person name="Dickens N.J."/>
            <person name="Letunic I."/>
            <person name="Suyama M."/>
            <person name="Torrents D."/>
            <person name="von Mering C."/>
            <person name="Zdobnov E.M."/>
            <person name="Makova K."/>
            <person name="Nekrutenko A."/>
            <person name="Elnitski L."/>
            <person name="Eswara P."/>
            <person name="King D.C."/>
            <person name="Yang S.-P."/>
            <person name="Tyekucheva S."/>
            <person name="Radakrishnan A."/>
            <person name="Harris R.S."/>
            <person name="Chiaromonte F."/>
            <person name="Taylor J."/>
            <person name="He J."/>
            <person name="Rijnkels M."/>
            <person name="Griffiths-Jones S."/>
            <person name="Ureta-Vidal A."/>
            <person name="Hoffman M.M."/>
            <person name="Severin J."/>
            <person name="Searle S.M.J."/>
            <person name="Law A.S."/>
            <person name="Speed D."/>
            <person name="Waddington D."/>
            <person name="Cheng Z."/>
            <person name="Tuzun E."/>
            <person name="Eichler E."/>
            <person name="Bao Z."/>
            <person name="Flicek P."/>
            <person name="Shteynberg D.D."/>
            <person name="Brent M.R."/>
            <person name="Bye J.M."/>
            <person name="Huckle E.J."/>
            <person name="Chatterji S."/>
            <person name="Dewey C."/>
            <person name="Pachter L."/>
            <person name="Kouranov A."/>
            <person name="Mourelatos Z."/>
            <person name="Hatzigeorgiou A.G."/>
            <person name="Paterson A.H."/>
            <person name="Ivarie R."/>
            <person name="Brandstrom M."/>
            <person name="Axelsson E."/>
            <person name="Backstrom N."/>
            <person name="Berlin S."/>
            <person name="Webster M.T."/>
            <person name="Pourquie O."/>
            <person name="Reymond A."/>
            <person name="Ucla C."/>
            <person name="Antonarakis S.E."/>
            <person name="Long M."/>
            <person name="Emerson J.J."/>
            <person name="Betran E."/>
            <person name="Dupanloup I."/>
            <person name="Kaessmann H."/>
            <person name="Hinrichs A.S."/>
            <person name="Bejerano G."/>
            <person name="Furey T.S."/>
            <person name="Harte R.A."/>
            <person name="Raney B."/>
            <person name="Siepel A."/>
            <person name="Kent W.J."/>
            <person name="Haussler D."/>
            <person name="Eyras E."/>
            <person name="Castelo R."/>
            <person name="Abril J.F."/>
            <person name="Castellano S."/>
            <person name="Camara F."/>
            <person name="Parra G."/>
            <person name="Guigo R."/>
            <person name="Bourque G."/>
            <person name="Tesler G."/>
            <person name="Pevzner P.A."/>
            <person name="Smit A."/>
            <person name="Fulton L.A."/>
            <person name="Mardis E.R."/>
            <person name="Wilson R.K."/>
        </authorList>
    </citation>
    <scope>NUCLEOTIDE SEQUENCE [LARGE SCALE GENOMIC DNA]</scope>
    <source>
        <strain>Red jungle fowl</strain>
    </source>
</reference>
<reference key="3">
    <citation type="unpublished observations" date="1996-07">
        <authorList>
            <person name="Duret L."/>
        </authorList>
    </citation>
    <scope>IDENTIFICATION</scope>
</reference>
<comment type="function">
    <text evidence="1">Component of the 43S pre-initiation complex (43S PIC), which binds to the mRNA cap-proximal region, scans mRNA 5'-untranslated region, and locates the initiation codon. Together with eIF1A (EIF1AX), EIF1 facilitates scanning and is essential for start codon recognition on the basis of AUG nucleotide context and location relative to the 5'-cap. Participates to initiation codon selection by influencing the conformation of the 40S ribosomal subunit and the positions of bound mRNA and initiator tRNA; this is possible after its binding to the interface surface of the platform of the 40S ribosomal subunit close to the P-site. Together with eIF1A (EIF1AX), also regulates the opening and closing of the mRNA binding channel, which ensures mRNA recruitment, scanning and the fidelity of initiation codon selection. Continuously monitors and protects against premature and partial base-pairing of codons in the 5'-UTR with the anticodon of initiator tRNA. Together with eIF1A (EIF1AX), acts for ribosomal scanning, promotion of the assembly of 48S complex at the initiation codon (43S PIC becomes 48S PIC after the start codon is reached), and dissociation of aberrant complexes. Interacts with EIF4G1, which in a mutual exclusive interaction associates either with EIF1 or with EIF4E on a common binding site. EIF4G1-EIF1 complex promotes ribosome scanning (on both short and long 5'UTR), leaky scanning (on short 5'UTR) which is the bypass of the initial start codon, and discrimination against cap-proximal AUG. Is probably maintained within the 43S PIC in open conformation thanks to eIF1A-EIF5 interaction. Once the correct start codon is reached, EIF1 is physically excluded from the decoding site, shifting the PIC into the closed conformation and arresting it at the start codon.</text>
</comment>
<comment type="subunit">
    <text evidence="1">Component of the 43S pre-initiation complex (43S PIC), which is composed of the 40S ribosomal subunit, EIF1, eIF1A (EIF1AX), eIF3 complex, EIF5 and eIF2-GTP-initiator tRNA complex (eIF2 ternary complex). Interacts with EIF4G1; in specific 5'-UTR length and AUG context. Interacts with EIF5; which in a mutual exclusive interaction associates either with EIF1 or with EIF2S2 on a common binding site. Interacts with RENT2.</text>
</comment>
<comment type="subcellular location">
    <subcellularLocation>
        <location evidence="1">Cytoplasm</location>
    </subcellularLocation>
</comment>
<comment type="similarity">
    <text evidence="3">Belongs to the SUI1 family.</text>
</comment>
<gene>
    <name type="primary">EIF1</name>
    <name type="synonym">SUI1</name>
</gene>
<name>EIF1_CHICK</name>
<proteinExistence type="inferred from homology"/>
<evidence type="ECO:0000250" key="1">
    <source>
        <dbReference type="UniProtKB" id="P41567"/>
    </source>
</evidence>
<evidence type="ECO:0000256" key="2">
    <source>
        <dbReference type="SAM" id="MobiDB-lite"/>
    </source>
</evidence>
<evidence type="ECO:0000305" key="3"/>
<feature type="initiator methionine" description="Removed" evidence="1">
    <location>
        <position position="1"/>
    </location>
</feature>
<feature type="chain" id="PRO_0000130557" description="Eukaryotic translation initiation factor 1">
    <location>
        <begin position="2"/>
        <end position="113"/>
    </location>
</feature>
<feature type="region of interest" description="Disordered" evidence="2">
    <location>
        <begin position="1"/>
        <end position="21"/>
    </location>
</feature>
<feature type="site" description="Binds 40S ribosomal subunit" evidence="1">
    <location>
        <position position="41"/>
    </location>
</feature>
<feature type="site" description="Binds 40S ribosomal subunit" evidence="1">
    <location>
        <position position="65"/>
    </location>
</feature>
<feature type="modified residue" description="N-acetylserine" evidence="1">
    <location>
        <position position="2"/>
    </location>
</feature>
<feature type="modified residue" description="Phosphoserine" evidence="1">
    <location>
        <position position="2"/>
    </location>
</feature>
<dbReference type="EMBL" id="U25125">
    <property type="status" value="NOT_ANNOTATED_CDS"/>
    <property type="molecule type" value="Genomic_DNA"/>
</dbReference>
<dbReference type="EMBL" id="AADN05000735">
    <property type="status" value="NOT_ANNOTATED_CDS"/>
    <property type="molecule type" value="Genomic_DNA"/>
</dbReference>
<dbReference type="RefSeq" id="NP_001161207.1">
    <property type="nucleotide sequence ID" value="NM_001167735.2"/>
</dbReference>
<dbReference type="BMRB" id="P51971"/>
<dbReference type="SMR" id="P51971"/>
<dbReference type="FunCoup" id="P51971">
    <property type="interactions" value="866"/>
</dbReference>
<dbReference type="STRING" id="9031.ENSGALP00000045582"/>
<dbReference type="PaxDb" id="9031-ENSGALP00000043024"/>
<dbReference type="Ensembl" id="ENSGALT00000043978">
    <property type="protein sequence ID" value="ENSGALP00000043024"/>
    <property type="gene ID" value="ENSGALG00000028517"/>
</dbReference>
<dbReference type="GeneID" id="420037"/>
<dbReference type="KEGG" id="gga:420037"/>
<dbReference type="CTD" id="10209"/>
<dbReference type="VEuPathDB" id="HostDB:geneid_420037"/>
<dbReference type="eggNOG" id="KOG1770">
    <property type="taxonomic scope" value="Eukaryota"/>
</dbReference>
<dbReference type="HOGENOM" id="CLU_082805_3_1_1"/>
<dbReference type="InParanoid" id="P51971"/>
<dbReference type="OMA" id="VENHIHI"/>
<dbReference type="OrthoDB" id="10248435at2759"/>
<dbReference type="PhylomeDB" id="P51971"/>
<dbReference type="PRO" id="PR:P51971"/>
<dbReference type="Proteomes" id="UP000000539">
    <property type="component" value="Unassembled WGS sequence"/>
</dbReference>
<dbReference type="GO" id="GO:0016282">
    <property type="term" value="C:eukaryotic 43S preinitiation complex"/>
    <property type="evidence" value="ECO:0000318"/>
    <property type="project" value="GO_Central"/>
</dbReference>
<dbReference type="GO" id="GO:0043024">
    <property type="term" value="F:ribosomal small subunit binding"/>
    <property type="evidence" value="ECO:0000318"/>
    <property type="project" value="GO_Central"/>
</dbReference>
<dbReference type="GO" id="GO:0003723">
    <property type="term" value="F:RNA binding"/>
    <property type="evidence" value="ECO:0000318"/>
    <property type="project" value="GO_Central"/>
</dbReference>
<dbReference type="GO" id="GO:0003743">
    <property type="term" value="F:translation initiation factor activity"/>
    <property type="evidence" value="ECO:0000318"/>
    <property type="project" value="GO_Central"/>
</dbReference>
<dbReference type="CDD" id="cd11566">
    <property type="entry name" value="eIF1_SUI1"/>
    <property type="match status" value="1"/>
</dbReference>
<dbReference type="FunFam" id="3.30.780.10:FF:000003">
    <property type="entry name" value="Eukaryotic translation initiation factor 1b"/>
    <property type="match status" value="1"/>
</dbReference>
<dbReference type="Gene3D" id="3.30.780.10">
    <property type="entry name" value="SUI1-like domain"/>
    <property type="match status" value="1"/>
</dbReference>
<dbReference type="InterPro" id="IPR001950">
    <property type="entry name" value="SUI1"/>
</dbReference>
<dbReference type="InterPro" id="IPR036877">
    <property type="entry name" value="SUI1_dom_sf"/>
</dbReference>
<dbReference type="InterPro" id="IPR005874">
    <property type="entry name" value="SUI1_euk"/>
</dbReference>
<dbReference type="NCBIfam" id="TIGR01160">
    <property type="entry name" value="SUI1_MOF2"/>
    <property type="match status" value="1"/>
</dbReference>
<dbReference type="PANTHER" id="PTHR10388">
    <property type="entry name" value="EUKARYOTIC TRANSLATION INITIATION FACTOR SUI1"/>
    <property type="match status" value="1"/>
</dbReference>
<dbReference type="Pfam" id="PF01253">
    <property type="entry name" value="SUI1"/>
    <property type="match status" value="1"/>
</dbReference>
<dbReference type="PIRSF" id="PIRSF004499">
    <property type="entry name" value="SUI1_euk"/>
    <property type="match status" value="1"/>
</dbReference>
<dbReference type="SUPFAM" id="SSF55159">
    <property type="entry name" value="eIF1-like"/>
    <property type="match status" value="1"/>
</dbReference>
<dbReference type="PROSITE" id="PS50296">
    <property type="entry name" value="SUI1"/>
    <property type="match status" value="1"/>
</dbReference>
<protein>
    <recommendedName>
        <fullName>Eukaryotic translation initiation factor 1</fullName>
        <shortName>eIF1</shortName>
    </recommendedName>
    <alternativeName>
        <fullName>Protein translation factor SUI1 homolog</fullName>
    </alternativeName>
</protein>
<keyword id="KW-0007">Acetylation</keyword>
<keyword id="KW-0963">Cytoplasm</keyword>
<keyword id="KW-0396">Initiation factor</keyword>
<keyword id="KW-0597">Phosphoprotein</keyword>
<keyword id="KW-0648">Protein biosynthesis</keyword>
<keyword id="KW-1185">Reference proteome</keyword>